<gene>
    <name evidence="1" type="primary">prfA</name>
    <name type="ordered locus">Syncc9902_1984</name>
</gene>
<proteinExistence type="inferred from homology"/>
<comment type="function">
    <text evidence="1">Peptide chain release factor 1 directs the termination of translation in response to the peptide chain termination codons UAG and UAA.</text>
</comment>
<comment type="subcellular location">
    <subcellularLocation>
        <location evidence="1">Cytoplasm</location>
    </subcellularLocation>
</comment>
<comment type="PTM">
    <text evidence="1">Methylated by PrmC. Methylation increases the termination efficiency of RF1.</text>
</comment>
<comment type="similarity">
    <text evidence="1">Belongs to the prokaryotic/mitochondrial release factor family.</text>
</comment>
<evidence type="ECO:0000255" key="1">
    <source>
        <dbReference type="HAMAP-Rule" id="MF_00093"/>
    </source>
</evidence>
<evidence type="ECO:0000256" key="2">
    <source>
        <dbReference type="SAM" id="MobiDB-lite"/>
    </source>
</evidence>
<organism>
    <name type="scientific">Synechococcus sp. (strain CC9902)</name>
    <dbReference type="NCBI Taxonomy" id="316279"/>
    <lineage>
        <taxon>Bacteria</taxon>
        <taxon>Bacillati</taxon>
        <taxon>Cyanobacteriota</taxon>
        <taxon>Cyanophyceae</taxon>
        <taxon>Synechococcales</taxon>
        <taxon>Synechococcaceae</taxon>
        <taxon>Synechococcus</taxon>
    </lineage>
</organism>
<sequence>MDASTLTSRLQTATASFRSLERQLADPDVANDPKRLETIARERSRLEPLVLDFEALQKLEQEQADARELLRESRSDAAMQELAQDELSELEAQHTALLQRLTLALLPRDPRDDRSVMLEIRAGAGGDEACIWAGDLARMYERYGQKLGWSVQQLSCTEADLGGYRELIVSVKGTSVFSQLKFEAGVHRVQRVPATESQGRVHTSTATVAVMPEADAVEVELDPKDLEISTARSGGAGGQNVNKVETAVDLLHKPTGIRVFCTQQRSQLQNRERALEILRAKLLERELAAAAERESSHRRSQVGSGDRSEKIRTYNYKDNRTTDHRLGRNFSLEPVLQGQLEDLIGACIAEEQRQKLEALSEETDD</sequence>
<reference key="1">
    <citation type="submission" date="2005-08" db="EMBL/GenBank/DDBJ databases">
        <title>Complete sequence of Synechococcus sp. CC9902.</title>
        <authorList>
            <person name="Copeland A."/>
            <person name="Lucas S."/>
            <person name="Lapidus A."/>
            <person name="Barry K."/>
            <person name="Detter J.C."/>
            <person name="Glavina T."/>
            <person name="Hammon N."/>
            <person name="Israni S."/>
            <person name="Pitluck S."/>
            <person name="Martinez M."/>
            <person name="Schmutz J."/>
            <person name="Larimer F."/>
            <person name="Land M."/>
            <person name="Kyrpides N."/>
            <person name="Ivanova N."/>
            <person name="Richardson P."/>
        </authorList>
    </citation>
    <scope>NUCLEOTIDE SEQUENCE [LARGE SCALE GENOMIC DNA]</scope>
    <source>
        <strain>CC9902</strain>
    </source>
</reference>
<feature type="chain" id="PRO_0000263375" description="Peptide chain release factor 1">
    <location>
        <begin position="1"/>
        <end position="365"/>
    </location>
</feature>
<feature type="region of interest" description="Disordered" evidence="2">
    <location>
        <begin position="290"/>
        <end position="325"/>
    </location>
</feature>
<feature type="compositionally biased region" description="Basic and acidic residues" evidence="2">
    <location>
        <begin position="306"/>
        <end position="325"/>
    </location>
</feature>
<feature type="modified residue" description="N5-methylglutamine" evidence="1">
    <location>
        <position position="239"/>
    </location>
</feature>
<keyword id="KW-0963">Cytoplasm</keyword>
<keyword id="KW-0488">Methylation</keyword>
<keyword id="KW-0648">Protein biosynthesis</keyword>
<keyword id="KW-1185">Reference proteome</keyword>
<protein>
    <recommendedName>
        <fullName evidence="1">Peptide chain release factor 1</fullName>
        <shortName evidence="1">RF-1</shortName>
    </recommendedName>
</protein>
<name>RF1_SYNS9</name>
<dbReference type="EMBL" id="CP000097">
    <property type="protein sequence ID" value="ABB26942.1"/>
    <property type="molecule type" value="Genomic_DNA"/>
</dbReference>
<dbReference type="RefSeq" id="WP_011360735.1">
    <property type="nucleotide sequence ID" value="NC_007513.1"/>
</dbReference>
<dbReference type="SMR" id="Q3AW64"/>
<dbReference type="STRING" id="316279.Syncc9902_1984"/>
<dbReference type="KEGG" id="sye:Syncc9902_1984"/>
<dbReference type="eggNOG" id="COG0216">
    <property type="taxonomic scope" value="Bacteria"/>
</dbReference>
<dbReference type="HOGENOM" id="CLU_036856_0_1_3"/>
<dbReference type="OrthoDB" id="9806673at2"/>
<dbReference type="Proteomes" id="UP000002712">
    <property type="component" value="Chromosome"/>
</dbReference>
<dbReference type="GO" id="GO:0005737">
    <property type="term" value="C:cytoplasm"/>
    <property type="evidence" value="ECO:0007669"/>
    <property type="project" value="UniProtKB-SubCell"/>
</dbReference>
<dbReference type="GO" id="GO:0016149">
    <property type="term" value="F:translation release factor activity, codon specific"/>
    <property type="evidence" value="ECO:0007669"/>
    <property type="project" value="UniProtKB-UniRule"/>
</dbReference>
<dbReference type="FunFam" id="3.30.160.20:FF:000004">
    <property type="entry name" value="Peptide chain release factor 1"/>
    <property type="match status" value="1"/>
</dbReference>
<dbReference type="FunFam" id="3.30.70.1660:FF:000002">
    <property type="entry name" value="Peptide chain release factor 1"/>
    <property type="match status" value="1"/>
</dbReference>
<dbReference type="Gene3D" id="3.30.160.20">
    <property type="match status" value="1"/>
</dbReference>
<dbReference type="Gene3D" id="3.30.70.1660">
    <property type="match status" value="2"/>
</dbReference>
<dbReference type="Gene3D" id="6.10.140.1950">
    <property type="match status" value="1"/>
</dbReference>
<dbReference type="HAMAP" id="MF_00093">
    <property type="entry name" value="Rel_fac_1"/>
    <property type="match status" value="1"/>
</dbReference>
<dbReference type="InterPro" id="IPR005139">
    <property type="entry name" value="PCRF"/>
</dbReference>
<dbReference type="InterPro" id="IPR000352">
    <property type="entry name" value="Pep_chain_release_fac_I"/>
</dbReference>
<dbReference type="InterPro" id="IPR045853">
    <property type="entry name" value="Pep_chain_release_fac_I_sf"/>
</dbReference>
<dbReference type="InterPro" id="IPR050057">
    <property type="entry name" value="Prokaryotic/Mito_RF"/>
</dbReference>
<dbReference type="InterPro" id="IPR004373">
    <property type="entry name" value="RF-1"/>
</dbReference>
<dbReference type="NCBIfam" id="TIGR00019">
    <property type="entry name" value="prfA"/>
    <property type="match status" value="1"/>
</dbReference>
<dbReference type="NCBIfam" id="NF001859">
    <property type="entry name" value="PRK00591.1"/>
    <property type="match status" value="1"/>
</dbReference>
<dbReference type="PANTHER" id="PTHR43804">
    <property type="entry name" value="LD18447P"/>
    <property type="match status" value="1"/>
</dbReference>
<dbReference type="PANTHER" id="PTHR43804:SF8">
    <property type="entry name" value="PEPTIDE CHAIN RELEASE FACTOR APG3, CHLOROPLASTIC"/>
    <property type="match status" value="1"/>
</dbReference>
<dbReference type="Pfam" id="PF03462">
    <property type="entry name" value="PCRF"/>
    <property type="match status" value="1"/>
</dbReference>
<dbReference type="Pfam" id="PF00472">
    <property type="entry name" value="RF-1"/>
    <property type="match status" value="1"/>
</dbReference>
<dbReference type="SMART" id="SM00937">
    <property type="entry name" value="PCRF"/>
    <property type="match status" value="1"/>
</dbReference>
<dbReference type="SUPFAM" id="SSF75620">
    <property type="entry name" value="Release factor"/>
    <property type="match status" value="1"/>
</dbReference>
<dbReference type="PROSITE" id="PS00745">
    <property type="entry name" value="RF_PROK_I"/>
    <property type="match status" value="1"/>
</dbReference>
<accession>Q3AW64</accession>